<keyword id="KW-0687">Ribonucleoprotein</keyword>
<keyword id="KW-0689">Ribosomal protein</keyword>
<dbReference type="EMBL" id="AE016827">
    <property type="protein sequence ID" value="AAU37047.1"/>
    <property type="molecule type" value="Genomic_DNA"/>
</dbReference>
<dbReference type="RefSeq" id="WP_011199622.1">
    <property type="nucleotide sequence ID" value="NC_006300.1"/>
</dbReference>
<dbReference type="SMR" id="Q65VG3"/>
<dbReference type="STRING" id="221988.MS0440"/>
<dbReference type="KEGG" id="msu:MS0440"/>
<dbReference type="eggNOG" id="COG0228">
    <property type="taxonomic scope" value="Bacteria"/>
</dbReference>
<dbReference type="HOGENOM" id="CLU_100590_5_1_6"/>
<dbReference type="OrthoDB" id="9807878at2"/>
<dbReference type="Proteomes" id="UP000000607">
    <property type="component" value="Chromosome"/>
</dbReference>
<dbReference type="GO" id="GO:0005737">
    <property type="term" value="C:cytoplasm"/>
    <property type="evidence" value="ECO:0007669"/>
    <property type="project" value="UniProtKB-ARBA"/>
</dbReference>
<dbReference type="GO" id="GO:0015935">
    <property type="term" value="C:small ribosomal subunit"/>
    <property type="evidence" value="ECO:0007669"/>
    <property type="project" value="TreeGrafter"/>
</dbReference>
<dbReference type="GO" id="GO:0003735">
    <property type="term" value="F:structural constituent of ribosome"/>
    <property type="evidence" value="ECO:0007669"/>
    <property type="project" value="InterPro"/>
</dbReference>
<dbReference type="GO" id="GO:0006412">
    <property type="term" value="P:translation"/>
    <property type="evidence" value="ECO:0007669"/>
    <property type="project" value="UniProtKB-UniRule"/>
</dbReference>
<dbReference type="FunFam" id="3.30.1320.10:FF:000001">
    <property type="entry name" value="30S ribosomal protein S16"/>
    <property type="match status" value="1"/>
</dbReference>
<dbReference type="Gene3D" id="3.30.1320.10">
    <property type="match status" value="1"/>
</dbReference>
<dbReference type="HAMAP" id="MF_00385">
    <property type="entry name" value="Ribosomal_bS16"/>
    <property type="match status" value="1"/>
</dbReference>
<dbReference type="InterPro" id="IPR000307">
    <property type="entry name" value="Ribosomal_bS16"/>
</dbReference>
<dbReference type="InterPro" id="IPR020592">
    <property type="entry name" value="Ribosomal_bS16_CS"/>
</dbReference>
<dbReference type="InterPro" id="IPR023803">
    <property type="entry name" value="Ribosomal_bS16_dom_sf"/>
</dbReference>
<dbReference type="NCBIfam" id="TIGR00002">
    <property type="entry name" value="S16"/>
    <property type="match status" value="1"/>
</dbReference>
<dbReference type="PANTHER" id="PTHR12919">
    <property type="entry name" value="30S RIBOSOMAL PROTEIN S16"/>
    <property type="match status" value="1"/>
</dbReference>
<dbReference type="PANTHER" id="PTHR12919:SF20">
    <property type="entry name" value="SMALL RIBOSOMAL SUBUNIT PROTEIN BS16M"/>
    <property type="match status" value="1"/>
</dbReference>
<dbReference type="Pfam" id="PF00886">
    <property type="entry name" value="Ribosomal_S16"/>
    <property type="match status" value="1"/>
</dbReference>
<dbReference type="SUPFAM" id="SSF54565">
    <property type="entry name" value="Ribosomal protein S16"/>
    <property type="match status" value="1"/>
</dbReference>
<dbReference type="PROSITE" id="PS00732">
    <property type="entry name" value="RIBOSOMAL_S16"/>
    <property type="match status" value="1"/>
</dbReference>
<sequence length="82" mass="9128">MVTIRLSRGGAKKRPFYQIVVADSRCPRDGRFIERVGFFNPLAAGNAERLRIQLDRVNAWLEKGASLSDRVAALVKEAQKAA</sequence>
<feature type="chain" id="PRO_0000243823" description="Small ribosomal subunit protein bS16">
    <location>
        <begin position="1"/>
        <end position="82"/>
    </location>
</feature>
<comment type="similarity">
    <text evidence="1">Belongs to the bacterial ribosomal protein bS16 family.</text>
</comment>
<gene>
    <name evidence="1" type="primary">rpsP</name>
    <name type="ordered locus">MS0440</name>
</gene>
<protein>
    <recommendedName>
        <fullName evidence="1">Small ribosomal subunit protein bS16</fullName>
    </recommendedName>
    <alternativeName>
        <fullName evidence="2">30S ribosomal protein S16</fullName>
    </alternativeName>
</protein>
<name>RS16_MANSM</name>
<accession>Q65VG3</accession>
<organism>
    <name type="scientific">Mannheimia succiniciproducens (strain KCTC 0769BP / MBEL55E)</name>
    <dbReference type="NCBI Taxonomy" id="221988"/>
    <lineage>
        <taxon>Bacteria</taxon>
        <taxon>Pseudomonadati</taxon>
        <taxon>Pseudomonadota</taxon>
        <taxon>Gammaproteobacteria</taxon>
        <taxon>Pasteurellales</taxon>
        <taxon>Pasteurellaceae</taxon>
        <taxon>Basfia</taxon>
    </lineage>
</organism>
<evidence type="ECO:0000255" key="1">
    <source>
        <dbReference type="HAMAP-Rule" id="MF_00385"/>
    </source>
</evidence>
<evidence type="ECO:0000305" key="2"/>
<reference key="1">
    <citation type="journal article" date="2004" name="Nat. Biotechnol.">
        <title>The genome sequence of the capnophilic rumen bacterium Mannheimia succiniciproducens.</title>
        <authorList>
            <person name="Hong S.H."/>
            <person name="Kim J.S."/>
            <person name="Lee S.Y."/>
            <person name="In Y.H."/>
            <person name="Choi S.S."/>
            <person name="Rih J.-K."/>
            <person name="Kim C.H."/>
            <person name="Jeong H."/>
            <person name="Hur C.G."/>
            <person name="Kim J.J."/>
        </authorList>
    </citation>
    <scope>NUCLEOTIDE SEQUENCE [LARGE SCALE GENOMIC DNA]</scope>
    <source>
        <strain>KCTC 0769BP / MBEL55E</strain>
    </source>
</reference>
<proteinExistence type="inferred from homology"/>